<reference key="1">
    <citation type="journal article" date="2005" name="PLoS Biol.">
        <title>Major structural differences and novel potential virulence mechanisms from the genomes of multiple Campylobacter species.</title>
        <authorList>
            <person name="Fouts D.E."/>
            <person name="Mongodin E.F."/>
            <person name="Mandrell R.E."/>
            <person name="Miller W.G."/>
            <person name="Rasko D.A."/>
            <person name="Ravel J."/>
            <person name="Brinkac L.M."/>
            <person name="DeBoy R.T."/>
            <person name="Parker C.T."/>
            <person name="Daugherty S.C."/>
            <person name="Dodson R.J."/>
            <person name="Durkin A.S."/>
            <person name="Madupu R."/>
            <person name="Sullivan S.A."/>
            <person name="Shetty J.U."/>
            <person name="Ayodeji M.A."/>
            <person name="Shvartsbeyn A."/>
            <person name="Schatz M.C."/>
            <person name="Badger J.H."/>
            <person name="Fraser C.M."/>
            <person name="Nelson K.E."/>
        </authorList>
    </citation>
    <scope>NUCLEOTIDE SEQUENCE [LARGE SCALE GENOMIC DNA]</scope>
    <source>
        <strain>RM1221</strain>
    </source>
</reference>
<name>NUON_CAMJR</name>
<gene>
    <name evidence="1" type="primary">nuoN</name>
    <name type="ordered locus">CJE1737</name>
</gene>
<feature type="chain" id="PRO_0000391121" description="NADH-quinone oxidoreductase subunit N">
    <location>
        <begin position="1"/>
        <end position="462"/>
    </location>
</feature>
<feature type="transmembrane region" description="Helical" evidence="1">
    <location>
        <begin position="15"/>
        <end position="35"/>
    </location>
</feature>
<feature type="transmembrane region" description="Helical" evidence="1">
    <location>
        <begin position="42"/>
        <end position="62"/>
    </location>
</feature>
<feature type="transmembrane region" description="Helical" evidence="1">
    <location>
        <begin position="80"/>
        <end position="100"/>
    </location>
</feature>
<feature type="transmembrane region" description="Helical" evidence="1">
    <location>
        <begin position="113"/>
        <end position="133"/>
    </location>
</feature>
<feature type="transmembrane region" description="Helical" evidence="1">
    <location>
        <begin position="161"/>
        <end position="181"/>
    </location>
</feature>
<feature type="transmembrane region" description="Helical" evidence="1">
    <location>
        <begin position="204"/>
        <end position="224"/>
    </location>
</feature>
<feature type="transmembrane region" description="Helical" evidence="1">
    <location>
        <begin position="239"/>
        <end position="259"/>
    </location>
</feature>
<feature type="transmembrane region" description="Helical" evidence="1">
    <location>
        <begin position="267"/>
        <end position="287"/>
    </location>
</feature>
<feature type="transmembrane region" description="Helical" evidence="1">
    <location>
        <begin position="295"/>
        <end position="315"/>
    </location>
</feature>
<feature type="transmembrane region" description="Helical" evidence="1">
    <location>
        <begin position="323"/>
        <end position="343"/>
    </location>
</feature>
<feature type="transmembrane region" description="Helical" evidence="1">
    <location>
        <begin position="366"/>
        <end position="386"/>
    </location>
</feature>
<feature type="transmembrane region" description="Helical" evidence="1">
    <location>
        <begin position="396"/>
        <end position="416"/>
    </location>
</feature>
<feature type="transmembrane region" description="Helical" evidence="1">
    <location>
        <begin position="441"/>
        <end position="461"/>
    </location>
</feature>
<accession>Q5HSM5</accession>
<sequence length="462" mass="51587">MLNNFLNLELLNISLSYPFLFLITTAIVLLLCSGFWKFHRSFYIGISSLSLIVSAFLILNNANAQGLEAKAFLATLNNDIVSFYASLVILCFSFLYLLMQKEENQGEFYALFLFMIASLLLMVSSSNLVLIFIGLESSSLALYTLIAMRGSDNAISSAIKYFSIAAVGAGFFVMAVAFIYLKTGTLDLSANLALKNEFQKDPMLLGAGVMIFVLCAIKLSLAPFHFWLKDVYYAAHTNLVAFISVVPKVAMLVVVIRLFDFLNNTGFEYIIIVLAIFSMLIGAFAALSQNNIKKMFAYSSVVHSSLVLIACIPLLKEQNFDGILLAIFGYWTLFAFANYAVFMILSNYENNSYESLNGLLVKKPLIAFCLSISVLSLAGIPPFGVFWGKFMILNTVILNGYWYLALFVALSSVIMLYAYLKILIHVLFMKNDRVYNIKFSFIQNFILAFCVCVSIFAILLML</sequence>
<proteinExistence type="inferred from homology"/>
<keyword id="KW-0997">Cell inner membrane</keyword>
<keyword id="KW-1003">Cell membrane</keyword>
<keyword id="KW-0472">Membrane</keyword>
<keyword id="KW-0520">NAD</keyword>
<keyword id="KW-0874">Quinone</keyword>
<keyword id="KW-1278">Translocase</keyword>
<keyword id="KW-0812">Transmembrane</keyword>
<keyword id="KW-1133">Transmembrane helix</keyword>
<keyword id="KW-0813">Transport</keyword>
<keyword id="KW-0830">Ubiquinone</keyword>
<comment type="function">
    <text evidence="1">NDH-1 shuttles electrons from NADH, via FMN and iron-sulfur (Fe-S) centers, to quinones in the respiratory chain. The immediate electron acceptor for the enzyme in this species is believed to be ubiquinone. Couples the redox reaction to proton translocation (for every two electrons transferred, four hydrogen ions are translocated across the cytoplasmic membrane), and thus conserves the redox energy in a proton gradient.</text>
</comment>
<comment type="catalytic activity">
    <reaction evidence="1">
        <text>a quinone + NADH + 5 H(+)(in) = a quinol + NAD(+) + 4 H(+)(out)</text>
        <dbReference type="Rhea" id="RHEA:57888"/>
        <dbReference type="ChEBI" id="CHEBI:15378"/>
        <dbReference type="ChEBI" id="CHEBI:24646"/>
        <dbReference type="ChEBI" id="CHEBI:57540"/>
        <dbReference type="ChEBI" id="CHEBI:57945"/>
        <dbReference type="ChEBI" id="CHEBI:132124"/>
    </reaction>
</comment>
<comment type="subunit">
    <text evidence="1">NDH-1 is composed of 14 different subunits. Subunits NuoA, H, J, K, L, M, N constitute the membrane sector of the complex.</text>
</comment>
<comment type="subcellular location">
    <subcellularLocation>
        <location evidence="1">Cell inner membrane</location>
        <topology evidence="1">Multi-pass membrane protein</topology>
    </subcellularLocation>
</comment>
<comment type="similarity">
    <text evidence="1">Belongs to the complex I subunit 2 family.</text>
</comment>
<evidence type="ECO:0000255" key="1">
    <source>
        <dbReference type="HAMAP-Rule" id="MF_00445"/>
    </source>
</evidence>
<protein>
    <recommendedName>
        <fullName evidence="1">NADH-quinone oxidoreductase subunit N</fullName>
        <ecNumber evidence="1">7.1.1.-</ecNumber>
    </recommendedName>
    <alternativeName>
        <fullName evidence="1">NADH dehydrogenase I subunit N</fullName>
    </alternativeName>
    <alternativeName>
        <fullName evidence="1">NDH-1 subunit N</fullName>
    </alternativeName>
</protein>
<organism>
    <name type="scientific">Campylobacter jejuni (strain RM1221)</name>
    <dbReference type="NCBI Taxonomy" id="195099"/>
    <lineage>
        <taxon>Bacteria</taxon>
        <taxon>Pseudomonadati</taxon>
        <taxon>Campylobacterota</taxon>
        <taxon>Epsilonproteobacteria</taxon>
        <taxon>Campylobacterales</taxon>
        <taxon>Campylobacteraceae</taxon>
        <taxon>Campylobacter</taxon>
    </lineage>
</organism>
<dbReference type="EC" id="7.1.1.-" evidence="1"/>
<dbReference type="EMBL" id="CP000025">
    <property type="protein sequence ID" value="AAW36162.1"/>
    <property type="molecule type" value="Genomic_DNA"/>
</dbReference>
<dbReference type="RefSeq" id="WP_002867596.1">
    <property type="nucleotide sequence ID" value="NC_003912.7"/>
</dbReference>
<dbReference type="SMR" id="Q5HSM5"/>
<dbReference type="DNASU" id="3232364"/>
<dbReference type="KEGG" id="cjr:CJE1737"/>
<dbReference type="HOGENOM" id="CLU_007100_1_4_7"/>
<dbReference type="GO" id="GO:0005886">
    <property type="term" value="C:plasma membrane"/>
    <property type="evidence" value="ECO:0007669"/>
    <property type="project" value="UniProtKB-SubCell"/>
</dbReference>
<dbReference type="GO" id="GO:0008137">
    <property type="term" value="F:NADH dehydrogenase (ubiquinone) activity"/>
    <property type="evidence" value="ECO:0007669"/>
    <property type="project" value="InterPro"/>
</dbReference>
<dbReference type="GO" id="GO:0050136">
    <property type="term" value="F:NADH:ubiquinone reductase (non-electrogenic) activity"/>
    <property type="evidence" value="ECO:0007669"/>
    <property type="project" value="UniProtKB-UniRule"/>
</dbReference>
<dbReference type="GO" id="GO:0048038">
    <property type="term" value="F:quinone binding"/>
    <property type="evidence" value="ECO:0007669"/>
    <property type="project" value="UniProtKB-KW"/>
</dbReference>
<dbReference type="GO" id="GO:0042773">
    <property type="term" value="P:ATP synthesis coupled electron transport"/>
    <property type="evidence" value="ECO:0007669"/>
    <property type="project" value="InterPro"/>
</dbReference>
<dbReference type="HAMAP" id="MF_00445">
    <property type="entry name" value="NDH1_NuoN_1"/>
    <property type="match status" value="1"/>
</dbReference>
<dbReference type="InterPro" id="IPR010096">
    <property type="entry name" value="NADH-Q_OxRdtase_suN/2"/>
</dbReference>
<dbReference type="InterPro" id="IPR001750">
    <property type="entry name" value="ND/Mrp_TM"/>
</dbReference>
<dbReference type="PANTHER" id="PTHR22773">
    <property type="entry name" value="NADH DEHYDROGENASE"/>
    <property type="match status" value="1"/>
</dbReference>
<dbReference type="Pfam" id="PF00361">
    <property type="entry name" value="Proton_antipo_M"/>
    <property type="match status" value="1"/>
</dbReference>